<sequence length="804" mass="85871">MTSFQSTLDDDEDGIAEELAASQREISVAEFFEKNKHMLGFDSGARGLVTAVKEAVDNALDATEEAGILPDIYVEISEGRDYYTLIVEDNGPGITNAQIPKIFGKLLYGSRFHAREQSRGQQGIGISAAVLYSQLTSGKPVRIESRTQDSETANVYELIIDTDTNEPEISAETEVSAAKSDLRGTHGTRIEMALDANMRARGQLHDYIKHTAVVNPHARIELQEPGGELKSERAEEASLPAETDEILPHPHGVELGTLIKMLAETDSHSVSGFLQSEFTRVGSKTATGIIDAFRDEHFGREMRWRPPADADLEATVADAVANKDATHTAVFARTVADAVRDADSIAPAELGALVADAAADAQDDTGTSFGETVQANVVAAVRDALTSDRVADVLGPVDEATTVQKDDATVRGLAERIAAKFESGGDTDRVTRDTLDEYVFRAAENTAEYADATIGETARENVADALWARMATVPDDPPNTSALADDRDAASDLLAAMASVNVMAPPTSCLSPIEADQLEAGLRTEFDADFYAAATRDADVHGGDPFIVEAGIAYGGDIDSEGGVQLMRFANRVPLVYQRGACATTDVLGDIGWRNYNLSQPGGSGLPQGPAVIMVHVASTNVPFTSESKDAIANVPEIEAEIELAVREAARELKSFLQKRQSMRKRQQKQDVIMDILPTMAEKVGELTGRGGVDVSDSLARIMNNVLVERARSDDGQTVTLRVENHGTGSVDVDVTDIVSAEPDGVGDDASVVAMDDEYFVKWTPAVAGDDAAELTYSVDADADCELSVSGVADARLTVSEADT</sequence>
<organism>
    <name type="scientific">Halobacterium salinarum (strain ATCC 29341 / DSM 671 / R1)</name>
    <dbReference type="NCBI Taxonomy" id="478009"/>
    <lineage>
        <taxon>Archaea</taxon>
        <taxon>Methanobacteriati</taxon>
        <taxon>Methanobacteriota</taxon>
        <taxon>Stenosarchaea group</taxon>
        <taxon>Halobacteria</taxon>
        <taxon>Halobacteriales</taxon>
        <taxon>Halobacteriaceae</taxon>
        <taxon>Halobacterium</taxon>
        <taxon>Halobacterium salinarum NRC-34001</taxon>
    </lineage>
</organism>
<feature type="chain" id="PRO_1000116020" description="Type 2 DNA topoisomerase 6 subunit B">
    <location>
        <begin position="1"/>
        <end position="804"/>
    </location>
</feature>
<feature type="binding site" evidence="1">
    <location>
        <position position="58"/>
    </location>
    <ligand>
        <name>ATP</name>
        <dbReference type="ChEBI" id="CHEBI:30616"/>
    </ligand>
</feature>
<feature type="binding site" evidence="1">
    <location>
        <position position="89"/>
    </location>
    <ligand>
        <name>ATP</name>
        <dbReference type="ChEBI" id="CHEBI:30616"/>
    </ligand>
</feature>
<feature type="binding site" evidence="1">
    <location>
        <begin position="110"/>
        <end position="111"/>
    </location>
    <ligand>
        <name>ATP</name>
        <dbReference type="ChEBI" id="CHEBI:30616"/>
    </ligand>
</feature>
<feature type="binding site" evidence="1">
    <location>
        <begin position="120"/>
        <end position="127"/>
    </location>
    <ligand>
        <name>ATP</name>
        <dbReference type="ChEBI" id="CHEBI:30616"/>
    </ligand>
</feature>
<feature type="binding site" evidence="1">
    <location>
        <position position="629"/>
    </location>
    <ligand>
        <name>ATP</name>
        <dbReference type="ChEBI" id="CHEBI:30616"/>
    </ligand>
</feature>
<proteinExistence type="inferred from homology"/>
<evidence type="ECO:0000255" key="1">
    <source>
        <dbReference type="HAMAP-Rule" id="MF_00322"/>
    </source>
</evidence>
<accession>B0R4D3</accession>
<gene>
    <name evidence="1" type="primary">top6B</name>
    <name type="ordered locus">OE_2302R</name>
</gene>
<reference key="1">
    <citation type="journal article" date="2008" name="Genomics">
        <title>Evolution in the laboratory: the genome of Halobacterium salinarum strain R1 compared to that of strain NRC-1.</title>
        <authorList>
            <person name="Pfeiffer F."/>
            <person name="Schuster S.C."/>
            <person name="Broicher A."/>
            <person name="Falb M."/>
            <person name="Palm P."/>
            <person name="Rodewald K."/>
            <person name="Ruepp A."/>
            <person name="Soppa J."/>
            <person name="Tittor J."/>
            <person name="Oesterhelt D."/>
        </authorList>
    </citation>
    <scope>NUCLEOTIDE SEQUENCE [LARGE SCALE GENOMIC DNA]</scope>
    <source>
        <strain>ATCC 29341 / DSM 671 / R1</strain>
    </source>
</reference>
<dbReference type="EC" id="5.6.2.2" evidence="1"/>
<dbReference type="EMBL" id="AM774415">
    <property type="protein sequence ID" value="CAP13598.1"/>
    <property type="molecule type" value="Genomic_DNA"/>
</dbReference>
<dbReference type="RefSeq" id="WP_010902623.1">
    <property type="nucleotide sequence ID" value="NC_010364.1"/>
</dbReference>
<dbReference type="SMR" id="B0R4D3"/>
<dbReference type="EnsemblBacteria" id="CAP13598">
    <property type="protein sequence ID" value="CAP13598"/>
    <property type="gene ID" value="OE_2302R"/>
</dbReference>
<dbReference type="KEGG" id="hsl:OE_2302R"/>
<dbReference type="HOGENOM" id="CLU_006403_0_0_2"/>
<dbReference type="PhylomeDB" id="B0R4D3"/>
<dbReference type="Proteomes" id="UP000001321">
    <property type="component" value="Chromosome"/>
</dbReference>
<dbReference type="GO" id="GO:0005524">
    <property type="term" value="F:ATP binding"/>
    <property type="evidence" value="ECO:0007669"/>
    <property type="project" value="UniProtKB-UniRule"/>
</dbReference>
<dbReference type="GO" id="GO:0003677">
    <property type="term" value="F:DNA binding"/>
    <property type="evidence" value="ECO:0007669"/>
    <property type="project" value="UniProtKB-UniRule"/>
</dbReference>
<dbReference type="GO" id="GO:0003918">
    <property type="term" value="F:DNA topoisomerase type II (double strand cut, ATP-hydrolyzing) activity"/>
    <property type="evidence" value="ECO:0007669"/>
    <property type="project" value="UniProtKB-UniRule"/>
</dbReference>
<dbReference type="GO" id="GO:0006265">
    <property type="term" value="P:DNA topological change"/>
    <property type="evidence" value="ECO:0007669"/>
    <property type="project" value="UniProtKB-UniRule"/>
</dbReference>
<dbReference type="CDD" id="cd16933">
    <property type="entry name" value="HATPase_TopVIB-like"/>
    <property type="match status" value="1"/>
</dbReference>
<dbReference type="CDD" id="cd00823">
    <property type="entry name" value="TopoIIB_Trans"/>
    <property type="match status" value="1"/>
</dbReference>
<dbReference type="FunFam" id="3.30.565.10:FF:000062">
    <property type="entry name" value="Type 2 DNA topoisomerase 6 subunit B"/>
    <property type="match status" value="1"/>
</dbReference>
<dbReference type="Gene3D" id="1.10.8.50">
    <property type="match status" value="1"/>
</dbReference>
<dbReference type="Gene3D" id="2.60.40.2960">
    <property type="match status" value="1"/>
</dbReference>
<dbReference type="Gene3D" id="3.30.230.10">
    <property type="match status" value="1"/>
</dbReference>
<dbReference type="Gene3D" id="6.10.20.80">
    <property type="match status" value="1"/>
</dbReference>
<dbReference type="Gene3D" id="3.30.565.10">
    <property type="entry name" value="Histidine kinase-like ATPase, C-terminal domain"/>
    <property type="match status" value="1"/>
</dbReference>
<dbReference type="HAMAP" id="MF_00322">
    <property type="entry name" value="Top6B"/>
    <property type="match status" value="1"/>
</dbReference>
<dbReference type="InterPro" id="IPR036890">
    <property type="entry name" value="HATPase_C_sf"/>
</dbReference>
<dbReference type="InterPro" id="IPR020568">
    <property type="entry name" value="Ribosomal_Su5_D2-typ_SF"/>
</dbReference>
<dbReference type="InterPro" id="IPR014721">
    <property type="entry name" value="Ribsml_uS5_D2-typ_fold_subgr"/>
</dbReference>
<dbReference type="InterPro" id="IPR040494">
    <property type="entry name" value="Top6b_C"/>
</dbReference>
<dbReference type="InterPro" id="IPR005734">
    <property type="entry name" value="TopoVI_B"/>
</dbReference>
<dbReference type="InterPro" id="IPR015320">
    <property type="entry name" value="TopoVI_B_transducer"/>
</dbReference>
<dbReference type="NCBIfam" id="NF003218">
    <property type="entry name" value="PRK04184.1"/>
    <property type="match status" value="1"/>
</dbReference>
<dbReference type="NCBIfam" id="NF011439">
    <property type="entry name" value="PRK14868.1"/>
    <property type="match status" value="1"/>
</dbReference>
<dbReference type="NCBIfam" id="TIGR01052">
    <property type="entry name" value="top6b"/>
    <property type="match status" value="1"/>
</dbReference>
<dbReference type="PANTHER" id="PTHR48444">
    <property type="entry name" value="DNA TOPOISOMERASE 6 SUBUNIT B"/>
    <property type="match status" value="1"/>
</dbReference>
<dbReference type="PANTHER" id="PTHR48444:SF1">
    <property type="entry name" value="DNA TOPOISOMERASE 6 SUBUNIT B"/>
    <property type="match status" value="1"/>
</dbReference>
<dbReference type="Pfam" id="PF02518">
    <property type="entry name" value="HATPase_c"/>
    <property type="match status" value="1"/>
</dbReference>
<dbReference type="Pfam" id="PF18000">
    <property type="entry name" value="Top6b_C"/>
    <property type="match status" value="1"/>
</dbReference>
<dbReference type="Pfam" id="PF09239">
    <property type="entry name" value="Topo-VIb_trans"/>
    <property type="match status" value="1"/>
</dbReference>
<dbReference type="SMART" id="SM00387">
    <property type="entry name" value="HATPase_c"/>
    <property type="match status" value="1"/>
</dbReference>
<dbReference type="SUPFAM" id="SSF55874">
    <property type="entry name" value="ATPase domain of HSP90 chaperone/DNA topoisomerase II/histidine kinase"/>
    <property type="match status" value="1"/>
</dbReference>
<dbReference type="SUPFAM" id="SSF54211">
    <property type="entry name" value="Ribosomal protein S5 domain 2-like"/>
    <property type="match status" value="1"/>
</dbReference>
<comment type="function">
    <text evidence="1">Relaxes both positive and negative superturns and exhibits a strong decatenase activity.</text>
</comment>
<comment type="catalytic activity">
    <reaction evidence="1">
        <text>ATP-dependent breakage, passage and rejoining of double-stranded DNA.</text>
        <dbReference type="EC" id="5.6.2.2"/>
    </reaction>
</comment>
<comment type="subunit">
    <text evidence="1">Homodimer. Heterotetramer of two Top6A and two Top6B chains.</text>
</comment>
<comment type="similarity">
    <text evidence="1">Belongs to the TOP6B family.</text>
</comment>
<keyword id="KW-0067">ATP-binding</keyword>
<keyword id="KW-0238">DNA-binding</keyword>
<keyword id="KW-0413">Isomerase</keyword>
<keyword id="KW-0547">Nucleotide-binding</keyword>
<keyword id="KW-0799">Topoisomerase</keyword>
<name>TOP6B_HALS3</name>
<protein>
    <recommendedName>
        <fullName evidence="1">Type 2 DNA topoisomerase 6 subunit B</fullName>
        <ecNumber evidence="1">5.6.2.2</ecNumber>
    </recommendedName>
    <alternativeName>
        <fullName evidence="1">Type II DNA topoisomerase VI subunit B</fullName>
        <shortName evidence="1">TopoVI-B</shortName>
    </alternativeName>
</protein>